<protein>
    <recommendedName>
        <fullName evidence="1">A-type ATP synthase subunit A</fullName>
        <ecNumber evidence="1">7.1.2.2</ecNumber>
    </recommendedName>
</protein>
<accession>A1RSF1</accession>
<name>AATA_PYRIL</name>
<proteinExistence type="inferred from homology"/>
<keyword id="KW-0066">ATP synthesis</keyword>
<keyword id="KW-0067">ATP-binding</keyword>
<keyword id="KW-1003">Cell membrane</keyword>
<keyword id="KW-0375">Hydrogen ion transport</keyword>
<keyword id="KW-0406">Ion transport</keyword>
<keyword id="KW-0472">Membrane</keyword>
<keyword id="KW-0547">Nucleotide-binding</keyword>
<keyword id="KW-1278">Translocase</keyword>
<keyword id="KW-0813">Transport</keyword>
<organism>
    <name type="scientific">Pyrobaculum islandicum (strain DSM 4184 / JCM 9189 / GEO3)</name>
    <dbReference type="NCBI Taxonomy" id="384616"/>
    <lineage>
        <taxon>Archaea</taxon>
        <taxon>Thermoproteota</taxon>
        <taxon>Thermoprotei</taxon>
        <taxon>Thermoproteales</taxon>
        <taxon>Thermoproteaceae</taxon>
        <taxon>Pyrobaculum</taxon>
    </lineage>
</organism>
<feature type="chain" id="PRO_1000059351" description="A-type ATP synthase subunit A">
    <location>
        <begin position="1"/>
        <end position="593"/>
    </location>
</feature>
<feature type="binding site" evidence="1">
    <location>
        <begin position="236"/>
        <end position="243"/>
    </location>
    <ligand>
        <name>ATP</name>
        <dbReference type="ChEBI" id="CHEBI:30616"/>
    </ligand>
</feature>
<gene>
    <name evidence="1" type="primary">atpA</name>
    <name type="ordered locus">Pisl_0705</name>
</gene>
<dbReference type="EC" id="7.1.2.2" evidence="1"/>
<dbReference type="EMBL" id="CP000504">
    <property type="protein sequence ID" value="ABL87883.1"/>
    <property type="molecule type" value="Genomic_DNA"/>
</dbReference>
<dbReference type="RefSeq" id="WP_011762459.1">
    <property type="nucleotide sequence ID" value="NC_008701.1"/>
</dbReference>
<dbReference type="SMR" id="A1RSF1"/>
<dbReference type="STRING" id="384616.Pisl_0705"/>
<dbReference type="GeneID" id="4617181"/>
<dbReference type="KEGG" id="pis:Pisl_0705"/>
<dbReference type="eggNOG" id="arCOG00868">
    <property type="taxonomic scope" value="Archaea"/>
</dbReference>
<dbReference type="HOGENOM" id="CLU_008162_3_1_2"/>
<dbReference type="OrthoDB" id="115235at2157"/>
<dbReference type="Proteomes" id="UP000002595">
    <property type="component" value="Chromosome"/>
</dbReference>
<dbReference type="GO" id="GO:0005886">
    <property type="term" value="C:plasma membrane"/>
    <property type="evidence" value="ECO:0007669"/>
    <property type="project" value="UniProtKB-SubCell"/>
</dbReference>
<dbReference type="GO" id="GO:0005524">
    <property type="term" value="F:ATP binding"/>
    <property type="evidence" value="ECO:0007669"/>
    <property type="project" value="UniProtKB-UniRule"/>
</dbReference>
<dbReference type="GO" id="GO:0046933">
    <property type="term" value="F:proton-transporting ATP synthase activity, rotational mechanism"/>
    <property type="evidence" value="ECO:0007669"/>
    <property type="project" value="UniProtKB-UniRule"/>
</dbReference>
<dbReference type="GO" id="GO:0046961">
    <property type="term" value="F:proton-transporting ATPase activity, rotational mechanism"/>
    <property type="evidence" value="ECO:0007669"/>
    <property type="project" value="InterPro"/>
</dbReference>
<dbReference type="GO" id="GO:0042777">
    <property type="term" value="P:proton motive force-driven plasma membrane ATP synthesis"/>
    <property type="evidence" value="ECO:0007669"/>
    <property type="project" value="UniProtKB-UniRule"/>
</dbReference>
<dbReference type="CDD" id="cd18111">
    <property type="entry name" value="ATP-synt_V_A-type_alpha_C"/>
    <property type="match status" value="1"/>
</dbReference>
<dbReference type="CDD" id="cd18119">
    <property type="entry name" value="ATP-synt_V_A-type_alpha_N"/>
    <property type="match status" value="1"/>
</dbReference>
<dbReference type="CDD" id="cd01134">
    <property type="entry name" value="V_A-ATPase_A"/>
    <property type="match status" value="1"/>
</dbReference>
<dbReference type="FunFam" id="2.40.30.20:FF:000002">
    <property type="entry name" value="V-type proton ATPase catalytic subunit A"/>
    <property type="match status" value="1"/>
</dbReference>
<dbReference type="Gene3D" id="2.40.30.20">
    <property type="match status" value="1"/>
</dbReference>
<dbReference type="Gene3D" id="2.40.50.100">
    <property type="match status" value="1"/>
</dbReference>
<dbReference type="Gene3D" id="1.10.1140.10">
    <property type="entry name" value="Bovine Mitochondrial F1-atpase, Atp Synthase Beta Chain, Chain D, domain 3"/>
    <property type="match status" value="1"/>
</dbReference>
<dbReference type="Gene3D" id="3.40.50.300">
    <property type="entry name" value="P-loop containing nucleotide triphosphate hydrolases"/>
    <property type="match status" value="1"/>
</dbReference>
<dbReference type="HAMAP" id="MF_00309">
    <property type="entry name" value="ATP_synth_A_arch"/>
    <property type="match status" value="1"/>
</dbReference>
<dbReference type="InterPro" id="IPR055190">
    <property type="entry name" value="ATP-synt_VA_C"/>
</dbReference>
<dbReference type="InterPro" id="IPR031686">
    <property type="entry name" value="ATP-synth_a_Xtn"/>
</dbReference>
<dbReference type="InterPro" id="IPR023366">
    <property type="entry name" value="ATP_synth_asu-like_sf"/>
</dbReference>
<dbReference type="InterPro" id="IPR004100">
    <property type="entry name" value="ATPase_F1/V1/A1_a/bsu_N"/>
</dbReference>
<dbReference type="InterPro" id="IPR036121">
    <property type="entry name" value="ATPase_F1/V1/A1_a/bsu_N_sf"/>
</dbReference>
<dbReference type="InterPro" id="IPR000194">
    <property type="entry name" value="ATPase_F1/V1/A1_a/bsu_nucl-bd"/>
</dbReference>
<dbReference type="InterPro" id="IPR024034">
    <property type="entry name" value="ATPase_F1/V1_b/a_C"/>
</dbReference>
<dbReference type="InterPro" id="IPR027417">
    <property type="entry name" value="P-loop_NTPase"/>
</dbReference>
<dbReference type="InterPro" id="IPR022878">
    <property type="entry name" value="V-ATPase_asu"/>
</dbReference>
<dbReference type="NCBIfam" id="NF003220">
    <property type="entry name" value="PRK04192.1"/>
    <property type="match status" value="1"/>
</dbReference>
<dbReference type="PANTHER" id="PTHR43607:SF1">
    <property type="entry name" value="H(+)-TRANSPORTING TWO-SECTOR ATPASE"/>
    <property type="match status" value="1"/>
</dbReference>
<dbReference type="PANTHER" id="PTHR43607">
    <property type="entry name" value="V-TYPE PROTON ATPASE CATALYTIC SUBUNIT A"/>
    <property type="match status" value="1"/>
</dbReference>
<dbReference type="Pfam" id="PF00006">
    <property type="entry name" value="ATP-synt_ab"/>
    <property type="match status" value="1"/>
</dbReference>
<dbReference type="Pfam" id="PF02874">
    <property type="entry name" value="ATP-synt_ab_N"/>
    <property type="match status" value="1"/>
</dbReference>
<dbReference type="Pfam" id="PF16886">
    <property type="entry name" value="ATP-synt_ab_Xtn"/>
    <property type="match status" value="1"/>
</dbReference>
<dbReference type="Pfam" id="PF22919">
    <property type="entry name" value="ATP-synt_VA_C"/>
    <property type="match status" value="1"/>
</dbReference>
<dbReference type="SUPFAM" id="SSF47917">
    <property type="entry name" value="C-terminal domain of alpha and beta subunits of F1 ATP synthase"/>
    <property type="match status" value="1"/>
</dbReference>
<dbReference type="SUPFAM" id="SSF50615">
    <property type="entry name" value="N-terminal domain of alpha and beta subunits of F1 ATP synthase"/>
    <property type="match status" value="1"/>
</dbReference>
<dbReference type="SUPFAM" id="SSF52540">
    <property type="entry name" value="P-loop containing nucleoside triphosphate hydrolases"/>
    <property type="match status" value="1"/>
</dbReference>
<sequence length="593" mass="66487">MSGKIEYISGPVVKADLPGARLYELVFVGEIKLFGEVVRVQGDKAFIQVYEDTTGLKPGEPVVRTGEPLSAWLGPTIMGKIYDGVQRPLKNIEEISKSPFIARGVGYDQAPPLDLKAEFDFKPNVKPGEEVYPGDVLGSVKETELITHYILYPPLPEYVPGTVEWIADGKYKVDDVIARIKTKRGVIEVKMWHKWPVRRPRPFREKLPPVEPLITGVRTIDTMFPIAKGGTAAIPGPFGSGKTVAIRTLSMYAQSRIIIPVLCGERGNEAADALQGLLKLKDPNTGRPLLERTTIIVNTSNMPVAAREASVYMGTTIGEYFRDQGYDVLVLADSTSRWAEAMREVALRIGEMPSEEGYPAYLPTRLAEFYERAGRVVLMGSKERIGSLTIAASVSPPGGDFTEPVTSNTLRFIGAFWPLSPRLAYSRHYPAIDWLLAFSRYVDTVEVWWSKNISPDWRKIRDTLQSILVKEAELQEIVRILGTEALSEYEKHILNVAYMIREGFLKQDAYNPVDTPSSPIKQYLLMKAIYAYYEEGLKAIEAGIPASVLRELETVKRLPRLRMEITNDVAKEELTKFIEMLISEIRTTISKRQ</sequence>
<reference key="1">
    <citation type="submission" date="2006-12" db="EMBL/GenBank/DDBJ databases">
        <title>Complete sequence of Pyrobaculum islandicum DSM 4184.</title>
        <authorList>
            <person name="Copeland A."/>
            <person name="Lucas S."/>
            <person name="Lapidus A."/>
            <person name="Barry K."/>
            <person name="Detter J.C."/>
            <person name="Glavina del Rio T."/>
            <person name="Dalin E."/>
            <person name="Tice H."/>
            <person name="Pitluck S."/>
            <person name="Meincke L."/>
            <person name="Brettin T."/>
            <person name="Bruce D."/>
            <person name="Han C."/>
            <person name="Tapia R."/>
            <person name="Gilna P."/>
            <person name="Schmutz J."/>
            <person name="Larimer F."/>
            <person name="Land M."/>
            <person name="Hauser L."/>
            <person name="Kyrpides N."/>
            <person name="Mikhailova N."/>
            <person name="Cozen A.E."/>
            <person name="Fitz-Gibbon S.T."/>
            <person name="House C.H."/>
            <person name="Saltikov C."/>
            <person name="Lowe T."/>
            <person name="Richardson P."/>
        </authorList>
    </citation>
    <scope>NUCLEOTIDE SEQUENCE [LARGE SCALE GENOMIC DNA]</scope>
    <source>
        <strain>DSM 4184 / JCM 9189 / GEO3</strain>
    </source>
</reference>
<evidence type="ECO:0000255" key="1">
    <source>
        <dbReference type="HAMAP-Rule" id="MF_00309"/>
    </source>
</evidence>
<comment type="function">
    <text evidence="1">Component of the A-type ATP synthase that produces ATP from ADP in the presence of a proton gradient across the membrane. The A chain is the catalytic subunit.</text>
</comment>
<comment type="catalytic activity">
    <reaction evidence="1">
        <text>ATP + H2O + 4 H(+)(in) = ADP + phosphate + 5 H(+)(out)</text>
        <dbReference type="Rhea" id="RHEA:57720"/>
        <dbReference type="ChEBI" id="CHEBI:15377"/>
        <dbReference type="ChEBI" id="CHEBI:15378"/>
        <dbReference type="ChEBI" id="CHEBI:30616"/>
        <dbReference type="ChEBI" id="CHEBI:43474"/>
        <dbReference type="ChEBI" id="CHEBI:456216"/>
        <dbReference type="EC" id="7.1.2.2"/>
    </reaction>
</comment>
<comment type="subunit">
    <text evidence="1">Has multiple subunits with at least A(3), B(3), C, D, E, F, H, I and proteolipid K(x).</text>
</comment>
<comment type="subcellular location">
    <subcellularLocation>
        <location evidence="1">Cell membrane</location>
        <topology evidence="1">Peripheral membrane protein</topology>
    </subcellularLocation>
</comment>
<comment type="similarity">
    <text evidence="1">Belongs to the ATPase alpha/beta chains family.</text>
</comment>